<dbReference type="EMBL" id="EU926106">
    <property type="protein sequence ID" value="ACI41438.1"/>
    <property type="molecule type" value="mRNA"/>
</dbReference>
<dbReference type="EMBL" id="FM864110">
    <property type="protein sequence ID" value="CAS03707.1"/>
    <property type="molecule type" value="mRNA"/>
</dbReference>
<dbReference type="SMR" id="B6DD22"/>
<dbReference type="ArachnoServer" id="AS001042">
    <property type="toxin name" value="U13-lycotoxin-Ls1a"/>
</dbReference>
<dbReference type="GO" id="GO:0005576">
    <property type="term" value="C:extracellular region"/>
    <property type="evidence" value="ECO:0007669"/>
    <property type="project" value="UniProtKB-SubCell"/>
</dbReference>
<dbReference type="GO" id="GO:0090729">
    <property type="term" value="F:toxin activity"/>
    <property type="evidence" value="ECO:0007669"/>
    <property type="project" value="UniProtKB-KW"/>
</dbReference>
<comment type="subcellular location">
    <subcellularLocation>
        <location evidence="1">Secreted</location>
    </subcellularLocation>
</comment>
<comment type="tissue specificity">
    <text>Expressed by the venom gland.</text>
</comment>
<comment type="domain">
    <text evidence="1">The presence of a 'disulfide through disulfide kOR' structurally defines this protein as a knottin.</text>
</comment>
<comment type="PTM">
    <text evidence="3">Contains 6 disulfide bonds.</text>
</comment>
<comment type="similarity">
    <text evidence="3">Belongs to the neurotoxin 05 (agouti) family.</text>
</comment>
<organism>
    <name type="scientific">Lycosa singoriensis</name>
    <name type="common">Wolf spider</name>
    <name type="synonym">Aranea singoriensis</name>
    <dbReference type="NCBI Taxonomy" id="434756"/>
    <lineage>
        <taxon>Eukaryota</taxon>
        <taxon>Metazoa</taxon>
        <taxon>Ecdysozoa</taxon>
        <taxon>Arthropoda</taxon>
        <taxon>Chelicerata</taxon>
        <taxon>Arachnida</taxon>
        <taxon>Araneae</taxon>
        <taxon>Araneomorphae</taxon>
        <taxon>Entelegynae</taxon>
        <taxon>Lycosoidea</taxon>
        <taxon>Lycosidae</taxon>
        <taxon>Lycosa</taxon>
    </lineage>
</organism>
<name>TXD04_LYCSI</name>
<feature type="signal peptide" evidence="2">
    <location>
        <begin position="1"/>
        <end position="16"/>
    </location>
</feature>
<feature type="propeptide" id="PRO_0000401863" evidence="1">
    <location>
        <begin position="17"/>
        <end position="54"/>
    </location>
</feature>
<feature type="chain" id="PRO_0000401864" description="U13-lycotoxin-Ls1a">
    <location>
        <begin position="55"/>
        <end position="120"/>
    </location>
</feature>
<feature type="domain" description="Agouti">
    <location>
        <begin position="56"/>
        <end position="95"/>
    </location>
</feature>
<feature type="disulfide bond" evidence="1">
    <location>
        <begin position="56"/>
        <end position="70"/>
    </location>
</feature>
<feature type="disulfide bond" evidence="1">
    <location>
        <begin position="63"/>
        <end position="76"/>
    </location>
</feature>
<feature type="disulfide bond" evidence="1">
    <location>
        <begin position="69"/>
        <end position="87"/>
    </location>
</feature>
<feature type="disulfide bond" evidence="1">
    <location>
        <begin position="78"/>
        <end position="85"/>
    </location>
</feature>
<accession>B6DD22</accession>
<sequence>MKILFVLISILYAVYCFSSEEDVDSAYLANELEPVEDINSEQYAALEPKEEQGRSCADMGQDCKDDCDCCLNIATCNCWFGRYFCSCTFGDYQTCLRKKGKCKRNRPQSCPRSNLNRKKG</sequence>
<proteinExistence type="evidence at transcript level"/>
<evidence type="ECO:0000250" key="1"/>
<evidence type="ECO:0000255" key="2"/>
<evidence type="ECO:0000305" key="3"/>
<protein>
    <recommendedName>
        <fullName>U13-lycotoxin-Ls1a</fullName>
    </recommendedName>
    <alternativeName>
        <fullName>Toxin-like structure LSTX-L4</fullName>
    </alternativeName>
</protein>
<reference key="1">
    <citation type="journal article" date="2010" name="Zoology">
        <title>Transcriptome analysis of the venom glands of the Chinese wolf spider Lycosa singoriensis.</title>
        <authorList>
            <person name="Zhang Y."/>
            <person name="Chen J."/>
            <person name="Tang X."/>
            <person name="Wang F."/>
            <person name="Jiang L."/>
            <person name="Xiong X."/>
            <person name="Wang M."/>
            <person name="Rong M."/>
            <person name="Liu Z."/>
            <person name="Liang S."/>
        </authorList>
    </citation>
    <scope>NUCLEOTIDE SEQUENCE [LARGE SCALE MRNA]</scope>
    <source>
        <tissue>Venom gland</tissue>
    </source>
</reference>
<keyword id="KW-1015">Disulfide bond</keyword>
<keyword id="KW-0960">Knottin</keyword>
<keyword id="KW-0964">Secreted</keyword>
<keyword id="KW-0732">Signal</keyword>
<keyword id="KW-0800">Toxin</keyword>